<feature type="chain" id="PRO_1000050696" description="Large ribosomal subunit protein bL35">
    <location>
        <begin position="1"/>
        <end position="67"/>
    </location>
</feature>
<feature type="region of interest" description="Disordered" evidence="2">
    <location>
        <begin position="22"/>
        <end position="52"/>
    </location>
</feature>
<feature type="compositionally biased region" description="Basic residues" evidence="2">
    <location>
        <begin position="27"/>
        <end position="44"/>
    </location>
</feature>
<protein>
    <recommendedName>
        <fullName evidence="1">Large ribosomal subunit protein bL35</fullName>
    </recommendedName>
    <alternativeName>
        <fullName evidence="3">50S ribosomal protein L35</fullName>
    </alternativeName>
</protein>
<dbReference type="EMBL" id="CP000394">
    <property type="protein sequence ID" value="ABI62401.1"/>
    <property type="molecule type" value="Genomic_DNA"/>
</dbReference>
<dbReference type="RefSeq" id="WP_011632205.1">
    <property type="nucleotide sequence ID" value="NC_008343.2"/>
</dbReference>
<dbReference type="SMR" id="Q0BS01"/>
<dbReference type="STRING" id="391165.GbCGDNIH1_1503"/>
<dbReference type="GeneID" id="69745742"/>
<dbReference type="KEGG" id="gbe:GbCGDNIH1_1503"/>
<dbReference type="eggNOG" id="COG0291">
    <property type="taxonomic scope" value="Bacteria"/>
</dbReference>
<dbReference type="HOGENOM" id="CLU_169643_2_1_5"/>
<dbReference type="OrthoDB" id="9804851at2"/>
<dbReference type="Proteomes" id="UP000001963">
    <property type="component" value="Chromosome"/>
</dbReference>
<dbReference type="GO" id="GO:1990904">
    <property type="term" value="C:ribonucleoprotein complex"/>
    <property type="evidence" value="ECO:0007669"/>
    <property type="project" value="UniProtKB-KW"/>
</dbReference>
<dbReference type="GO" id="GO:0005840">
    <property type="term" value="C:ribosome"/>
    <property type="evidence" value="ECO:0007669"/>
    <property type="project" value="UniProtKB-KW"/>
</dbReference>
<dbReference type="GO" id="GO:0003735">
    <property type="term" value="F:structural constituent of ribosome"/>
    <property type="evidence" value="ECO:0007669"/>
    <property type="project" value="InterPro"/>
</dbReference>
<dbReference type="GO" id="GO:0006412">
    <property type="term" value="P:translation"/>
    <property type="evidence" value="ECO:0007669"/>
    <property type="project" value="UniProtKB-UniRule"/>
</dbReference>
<dbReference type="FunFam" id="4.10.410.60:FF:000001">
    <property type="entry name" value="50S ribosomal protein L35"/>
    <property type="match status" value="1"/>
</dbReference>
<dbReference type="Gene3D" id="4.10.410.60">
    <property type="match status" value="1"/>
</dbReference>
<dbReference type="HAMAP" id="MF_00514">
    <property type="entry name" value="Ribosomal_bL35"/>
    <property type="match status" value="1"/>
</dbReference>
<dbReference type="InterPro" id="IPR001706">
    <property type="entry name" value="Ribosomal_bL35"/>
</dbReference>
<dbReference type="InterPro" id="IPR021137">
    <property type="entry name" value="Ribosomal_bL35-like"/>
</dbReference>
<dbReference type="InterPro" id="IPR018265">
    <property type="entry name" value="Ribosomal_bL35_CS"/>
</dbReference>
<dbReference type="InterPro" id="IPR037229">
    <property type="entry name" value="Ribosomal_bL35_sf"/>
</dbReference>
<dbReference type="NCBIfam" id="TIGR00001">
    <property type="entry name" value="rpmI_bact"/>
    <property type="match status" value="1"/>
</dbReference>
<dbReference type="Pfam" id="PF01632">
    <property type="entry name" value="Ribosomal_L35p"/>
    <property type="match status" value="1"/>
</dbReference>
<dbReference type="PRINTS" id="PR00064">
    <property type="entry name" value="RIBOSOMALL35"/>
</dbReference>
<dbReference type="SUPFAM" id="SSF143034">
    <property type="entry name" value="L35p-like"/>
    <property type="match status" value="1"/>
</dbReference>
<dbReference type="PROSITE" id="PS00936">
    <property type="entry name" value="RIBOSOMAL_L35"/>
    <property type="match status" value="1"/>
</dbReference>
<proteinExistence type="inferred from homology"/>
<sequence>MPKLKTKSSVKKRFKITATGKVLAGPGKKRHNLSARSQKAKRQNRGSQVLTHADGLTVKQWAPYGLN</sequence>
<gene>
    <name evidence="1" type="primary">rpmI</name>
    <name type="ordered locus">GbCGDNIH1_1503</name>
</gene>
<keyword id="KW-1185">Reference proteome</keyword>
<keyword id="KW-0687">Ribonucleoprotein</keyword>
<keyword id="KW-0689">Ribosomal protein</keyword>
<reference key="1">
    <citation type="journal article" date="2007" name="J. Bacteriol.">
        <title>Genome sequence analysis of the emerging human pathogenic acetic acid bacterium Granulibacter bethesdensis.</title>
        <authorList>
            <person name="Greenberg D.E."/>
            <person name="Porcella S.F."/>
            <person name="Zelazny A.M."/>
            <person name="Virtaneva K."/>
            <person name="Sturdevant D.E."/>
            <person name="Kupko J.J. III"/>
            <person name="Barbian K.D."/>
            <person name="Babar A."/>
            <person name="Dorward D.W."/>
            <person name="Holland S.M."/>
        </authorList>
    </citation>
    <scope>NUCLEOTIDE SEQUENCE [LARGE SCALE GENOMIC DNA]</scope>
    <source>
        <strain>ATCC BAA-1260 / CGDNIH1</strain>
    </source>
</reference>
<accession>Q0BS01</accession>
<name>RL35_GRABC</name>
<evidence type="ECO:0000255" key="1">
    <source>
        <dbReference type="HAMAP-Rule" id="MF_00514"/>
    </source>
</evidence>
<evidence type="ECO:0000256" key="2">
    <source>
        <dbReference type="SAM" id="MobiDB-lite"/>
    </source>
</evidence>
<evidence type="ECO:0000305" key="3"/>
<organism>
    <name type="scientific">Granulibacter bethesdensis (strain ATCC BAA-1260 / CGDNIH1)</name>
    <dbReference type="NCBI Taxonomy" id="391165"/>
    <lineage>
        <taxon>Bacteria</taxon>
        <taxon>Pseudomonadati</taxon>
        <taxon>Pseudomonadota</taxon>
        <taxon>Alphaproteobacteria</taxon>
        <taxon>Acetobacterales</taxon>
        <taxon>Acetobacteraceae</taxon>
        <taxon>Granulibacter</taxon>
    </lineage>
</organism>
<comment type="similarity">
    <text evidence="1">Belongs to the bacterial ribosomal protein bL35 family.</text>
</comment>